<dbReference type="EMBL" id="CT971583">
    <property type="protein sequence ID" value="CAK24672.1"/>
    <property type="molecule type" value="Genomic_DNA"/>
</dbReference>
<dbReference type="SMR" id="A5GP07"/>
<dbReference type="STRING" id="32051.SynWH7803_2246"/>
<dbReference type="KEGG" id="syx:SynWH7803_2246"/>
<dbReference type="eggNOG" id="COG3063">
    <property type="taxonomic scope" value="Bacteria"/>
</dbReference>
<dbReference type="HOGENOM" id="CLU_141248_0_0_3"/>
<dbReference type="OrthoDB" id="9429505at2"/>
<dbReference type="Proteomes" id="UP000001566">
    <property type="component" value="Chromosome"/>
</dbReference>
<dbReference type="GO" id="GO:0031676">
    <property type="term" value="C:plasma membrane-derived thylakoid membrane"/>
    <property type="evidence" value="ECO:0007669"/>
    <property type="project" value="UniProtKB-SubCell"/>
</dbReference>
<dbReference type="GO" id="GO:0015979">
    <property type="term" value="P:photosynthesis"/>
    <property type="evidence" value="ECO:0007669"/>
    <property type="project" value="UniProtKB-UniRule"/>
</dbReference>
<dbReference type="Gene3D" id="1.25.40.10">
    <property type="entry name" value="Tetratricopeptide repeat domain"/>
    <property type="match status" value="1"/>
</dbReference>
<dbReference type="HAMAP" id="MF_00439">
    <property type="entry name" value="Ycf3"/>
    <property type="match status" value="1"/>
</dbReference>
<dbReference type="InterPro" id="IPR022818">
    <property type="entry name" value="PSI_Ycf3_assembly"/>
</dbReference>
<dbReference type="InterPro" id="IPR011990">
    <property type="entry name" value="TPR-like_helical_dom_sf"/>
</dbReference>
<dbReference type="InterPro" id="IPR019734">
    <property type="entry name" value="TPR_rpt"/>
</dbReference>
<dbReference type="InterPro" id="IPR051685">
    <property type="entry name" value="Ycf3/AcsC/BcsC/TPR_MFPF"/>
</dbReference>
<dbReference type="NCBIfam" id="NF002725">
    <property type="entry name" value="PRK02603.1"/>
    <property type="match status" value="1"/>
</dbReference>
<dbReference type="PANTHER" id="PTHR44943">
    <property type="entry name" value="CELLULOSE SYNTHASE OPERON PROTEIN C"/>
    <property type="match status" value="1"/>
</dbReference>
<dbReference type="PANTHER" id="PTHR44943:SF8">
    <property type="entry name" value="TPR REPEAT-CONTAINING PROTEIN MJ0263"/>
    <property type="match status" value="1"/>
</dbReference>
<dbReference type="Pfam" id="PF14559">
    <property type="entry name" value="TPR_19"/>
    <property type="match status" value="1"/>
</dbReference>
<dbReference type="SMART" id="SM00028">
    <property type="entry name" value="TPR"/>
    <property type="match status" value="3"/>
</dbReference>
<dbReference type="SUPFAM" id="SSF48452">
    <property type="entry name" value="TPR-like"/>
    <property type="match status" value="1"/>
</dbReference>
<dbReference type="PROSITE" id="PS50005">
    <property type="entry name" value="TPR"/>
    <property type="match status" value="3"/>
</dbReference>
<dbReference type="PROSITE" id="PS50293">
    <property type="entry name" value="TPR_REGION"/>
    <property type="match status" value="1"/>
</dbReference>
<name>YCF3_SYNPW</name>
<feature type="chain" id="PRO_1000025972" description="Photosystem I assembly protein Ycf3">
    <location>
        <begin position="1"/>
        <end position="173"/>
    </location>
</feature>
<feature type="repeat" description="TPR 1">
    <location>
        <begin position="35"/>
        <end position="68"/>
    </location>
</feature>
<feature type="repeat" description="TPR 2">
    <location>
        <begin position="72"/>
        <end position="105"/>
    </location>
</feature>
<feature type="repeat" description="TPR 3">
    <location>
        <begin position="120"/>
        <end position="153"/>
    </location>
</feature>
<accession>A5GP07</accession>
<evidence type="ECO:0000255" key="1">
    <source>
        <dbReference type="HAMAP-Rule" id="MF_00439"/>
    </source>
</evidence>
<organism>
    <name type="scientific">Synechococcus sp. (strain WH7803)</name>
    <dbReference type="NCBI Taxonomy" id="32051"/>
    <lineage>
        <taxon>Bacteria</taxon>
        <taxon>Bacillati</taxon>
        <taxon>Cyanobacteriota</taxon>
        <taxon>Cyanophyceae</taxon>
        <taxon>Synechococcales</taxon>
        <taxon>Synechococcaceae</taxon>
        <taxon>Synechococcus</taxon>
    </lineage>
</organism>
<keyword id="KW-0472">Membrane</keyword>
<keyword id="KW-0602">Photosynthesis</keyword>
<keyword id="KW-1185">Reference proteome</keyword>
<keyword id="KW-0677">Repeat</keyword>
<keyword id="KW-0793">Thylakoid</keyword>
<keyword id="KW-0802">TPR repeat</keyword>
<sequence length="173" mass="19803">MPRSNRNDNFIDKSFTVMADLIVKLLPINARAKEAYVYYRDGLSAQNDGDYAEALENYEESLKLEENPIDRGETLKNMAIIYMSNGEEDRALATYQKALDENPKQPSCLKNMGLIFEKRGRTAEEEGRRDDADGWFDQAAEVWTQAVRLNPGGYLDIENWLKSTGRSNVDVYF</sequence>
<proteinExistence type="inferred from homology"/>
<gene>
    <name evidence="1" type="primary">ycf3</name>
    <name type="ordered locus">SynWH7803_2246</name>
</gene>
<comment type="function">
    <text evidence="1">Essential for the assembly of the photosystem I (PSI) complex. May act as a chaperone-like factor to guide the assembly of the PSI subunits.</text>
</comment>
<comment type="subcellular location">
    <subcellularLocation>
        <location evidence="1">Cellular thylakoid membrane</location>
        <topology evidence="1">Peripheral membrane protein</topology>
    </subcellularLocation>
</comment>
<comment type="similarity">
    <text evidence="1">Belongs to the Ycf3 family.</text>
</comment>
<protein>
    <recommendedName>
        <fullName evidence="1">Photosystem I assembly protein Ycf3</fullName>
    </recommendedName>
</protein>
<reference key="1">
    <citation type="submission" date="2006-05" db="EMBL/GenBank/DDBJ databases">
        <authorList>
            <consortium name="Genoscope"/>
        </authorList>
    </citation>
    <scope>NUCLEOTIDE SEQUENCE [LARGE SCALE GENOMIC DNA]</scope>
    <source>
        <strain>WH7803</strain>
    </source>
</reference>